<accession>B6YQI6</accession>
<proteinExistence type="inferred from homology"/>
<gene>
    <name evidence="1" type="primary">rnc</name>
    <name type="ordered locus">CFPG_195</name>
</gene>
<reference key="1">
    <citation type="journal article" date="2008" name="Science">
        <title>Genome of an endosymbiont coupling N2 fixation to cellulolysis within RT protist cells in termite gut.</title>
        <authorList>
            <person name="Hongoh Y."/>
            <person name="Sharma V.K."/>
            <person name="Prakash T."/>
            <person name="Noda S."/>
            <person name="Toh H."/>
            <person name="Taylor T.D."/>
            <person name="Kudo T."/>
            <person name="Sakaki Y."/>
            <person name="Toyoda A."/>
            <person name="Hattori M."/>
            <person name="Ohkuma M."/>
        </authorList>
    </citation>
    <scope>NUCLEOTIDE SEQUENCE [LARGE SCALE GENOMIC DNA]</scope>
</reference>
<comment type="function">
    <text evidence="1">Digests double-stranded RNA. Involved in the processing of primary rRNA transcript to yield the immediate precursors to the large and small rRNAs (23S and 16S). Processes some mRNAs, and tRNAs when they are encoded in the rRNA operon. Processes pre-crRNA and tracrRNA of type II CRISPR loci if present in the organism.</text>
</comment>
<comment type="catalytic activity">
    <reaction evidence="1">
        <text>Endonucleolytic cleavage to 5'-phosphomonoester.</text>
        <dbReference type="EC" id="3.1.26.3"/>
    </reaction>
</comment>
<comment type="cofactor">
    <cofactor evidence="1">
        <name>Mg(2+)</name>
        <dbReference type="ChEBI" id="CHEBI:18420"/>
    </cofactor>
</comment>
<comment type="subunit">
    <text evidence="1">Homodimer.</text>
</comment>
<comment type="subcellular location">
    <subcellularLocation>
        <location evidence="1">Cytoplasm</location>
    </subcellularLocation>
</comment>
<comment type="similarity">
    <text evidence="1">Belongs to the ribonuclease III family.</text>
</comment>
<keyword id="KW-0963">Cytoplasm</keyword>
<keyword id="KW-0255">Endonuclease</keyword>
<keyword id="KW-0378">Hydrolase</keyword>
<keyword id="KW-0460">Magnesium</keyword>
<keyword id="KW-0479">Metal-binding</keyword>
<keyword id="KW-0507">mRNA processing</keyword>
<keyword id="KW-0540">Nuclease</keyword>
<keyword id="KW-1185">Reference proteome</keyword>
<keyword id="KW-0694">RNA-binding</keyword>
<keyword id="KW-0698">rRNA processing</keyword>
<keyword id="KW-0699">rRNA-binding</keyword>
<keyword id="KW-0819">tRNA processing</keyword>
<dbReference type="EC" id="3.1.26.3" evidence="1"/>
<dbReference type="EMBL" id="AP010656">
    <property type="protein sequence ID" value="BAG83458.1"/>
    <property type="molecule type" value="Genomic_DNA"/>
</dbReference>
<dbReference type="SMR" id="B6YQI6"/>
<dbReference type="STRING" id="511995.CFPG_195"/>
<dbReference type="KEGG" id="aps:CFPG_195"/>
<dbReference type="eggNOG" id="COG0571">
    <property type="taxonomic scope" value="Bacteria"/>
</dbReference>
<dbReference type="HOGENOM" id="CLU_000907_1_0_10"/>
<dbReference type="OrthoDB" id="9805026at2"/>
<dbReference type="Proteomes" id="UP000000723">
    <property type="component" value="Chromosome"/>
</dbReference>
<dbReference type="GO" id="GO:0005737">
    <property type="term" value="C:cytoplasm"/>
    <property type="evidence" value="ECO:0007669"/>
    <property type="project" value="UniProtKB-SubCell"/>
</dbReference>
<dbReference type="GO" id="GO:0003725">
    <property type="term" value="F:double-stranded RNA binding"/>
    <property type="evidence" value="ECO:0007669"/>
    <property type="project" value="TreeGrafter"/>
</dbReference>
<dbReference type="GO" id="GO:0046872">
    <property type="term" value="F:metal ion binding"/>
    <property type="evidence" value="ECO:0007669"/>
    <property type="project" value="UniProtKB-KW"/>
</dbReference>
<dbReference type="GO" id="GO:0004525">
    <property type="term" value="F:ribonuclease III activity"/>
    <property type="evidence" value="ECO:0007669"/>
    <property type="project" value="UniProtKB-UniRule"/>
</dbReference>
<dbReference type="GO" id="GO:0019843">
    <property type="term" value="F:rRNA binding"/>
    <property type="evidence" value="ECO:0007669"/>
    <property type="project" value="UniProtKB-KW"/>
</dbReference>
<dbReference type="GO" id="GO:0006397">
    <property type="term" value="P:mRNA processing"/>
    <property type="evidence" value="ECO:0007669"/>
    <property type="project" value="UniProtKB-UniRule"/>
</dbReference>
<dbReference type="GO" id="GO:0010468">
    <property type="term" value="P:regulation of gene expression"/>
    <property type="evidence" value="ECO:0007669"/>
    <property type="project" value="TreeGrafter"/>
</dbReference>
<dbReference type="GO" id="GO:0006364">
    <property type="term" value="P:rRNA processing"/>
    <property type="evidence" value="ECO:0007669"/>
    <property type="project" value="UniProtKB-UniRule"/>
</dbReference>
<dbReference type="GO" id="GO:0008033">
    <property type="term" value="P:tRNA processing"/>
    <property type="evidence" value="ECO:0007669"/>
    <property type="project" value="UniProtKB-KW"/>
</dbReference>
<dbReference type="CDD" id="cd10845">
    <property type="entry name" value="DSRM_RNAse_III_family"/>
    <property type="match status" value="1"/>
</dbReference>
<dbReference type="CDD" id="cd00593">
    <property type="entry name" value="RIBOc"/>
    <property type="match status" value="1"/>
</dbReference>
<dbReference type="FunFam" id="1.10.1520.10:FF:000001">
    <property type="entry name" value="Ribonuclease 3"/>
    <property type="match status" value="1"/>
</dbReference>
<dbReference type="Gene3D" id="3.30.160.20">
    <property type="match status" value="1"/>
</dbReference>
<dbReference type="Gene3D" id="1.10.1520.10">
    <property type="entry name" value="Ribonuclease III domain"/>
    <property type="match status" value="1"/>
</dbReference>
<dbReference type="HAMAP" id="MF_00104">
    <property type="entry name" value="RNase_III"/>
    <property type="match status" value="1"/>
</dbReference>
<dbReference type="InterPro" id="IPR014720">
    <property type="entry name" value="dsRBD_dom"/>
</dbReference>
<dbReference type="InterPro" id="IPR011907">
    <property type="entry name" value="RNase_III"/>
</dbReference>
<dbReference type="InterPro" id="IPR000999">
    <property type="entry name" value="RNase_III_dom"/>
</dbReference>
<dbReference type="InterPro" id="IPR036389">
    <property type="entry name" value="RNase_III_sf"/>
</dbReference>
<dbReference type="NCBIfam" id="TIGR02191">
    <property type="entry name" value="RNaseIII"/>
    <property type="match status" value="1"/>
</dbReference>
<dbReference type="PANTHER" id="PTHR11207:SF0">
    <property type="entry name" value="RIBONUCLEASE 3"/>
    <property type="match status" value="1"/>
</dbReference>
<dbReference type="PANTHER" id="PTHR11207">
    <property type="entry name" value="RIBONUCLEASE III"/>
    <property type="match status" value="1"/>
</dbReference>
<dbReference type="Pfam" id="PF00035">
    <property type="entry name" value="dsrm"/>
    <property type="match status" value="1"/>
</dbReference>
<dbReference type="Pfam" id="PF14622">
    <property type="entry name" value="Ribonucleas_3_3"/>
    <property type="match status" value="1"/>
</dbReference>
<dbReference type="SMART" id="SM00358">
    <property type="entry name" value="DSRM"/>
    <property type="match status" value="1"/>
</dbReference>
<dbReference type="SMART" id="SM00535">
    <property type="entry name" value="RIBOc"/>
    <property type="match status" value="1"/>
</dbReference>
<dbReference type="SUPFAM" id="SSF54768">
    <property type="entry name" value="dsRNA-binding domain-like"/>
    <property type="match status" value="1"/>
</dbReference>
<dbReference type="SUPFAM" id="SSF69065">
    <property type="entry name" value="RNase III domain-like"/>
    <property type="match status" value="1"/>
</dbReference>
<dbReference type="PROSITE" id="PS50137">
    <property type="entry name" value="DS_RBD"/>
    <property type="match status" value="1"/>
</dbReference>
<dbReference type="PROSITE" id="PS00517">
    <property type="entry name" value="RNASE_3_1"/>
    <property type="match status" value="1"/>
</dbReference>
<dbReference type="PROSITE" id="PS50142">
    <property type="entry name" value="RNASE_3_2"/>
    <property type="match status" value="1"/>
</dbReference>
<evidence type="ECO:0000255" key="1">
    <source>
        <dbReference type="HAMAP-Rule" id="MF_00104"/>
    </source>
</evidence>
<protein>
    <recommendedName>
        <fullName evidence="1">Ribonuclease 3</fullName>
        <ecNumber evidence="1">3.1.26.3</ecNumber>
    </recommendedName>
    <alternativeName>
        <fullName evidence="1">Ribonuclease III</fullName>
        <shortName evidence="1">RNase III</shortName>
    </alternativeName>
</protein>
<organism>
    <name type="scientific">Azobacteroides pseudotrichonymphae genomovar. CFP2</name>
    <dbReference type="NCBI Taxonomy" id="511995"/>
    <lineage>
        <taxon>Bacteria</taxon>
        <taxon>Pseudomonadati</taxon>
        <taxon>Bacteroidota</taxon>
        <taxon>Bacteroidia</taxon>
        <taxon>Bacteroidales</taxon>
        <taxon>Candidatus Azobacteroides</taxon>
    </lineage>
</organism>
<sequence length="261" mass="30505">MFRNILNTIGAFFSKKKESYFALYRMLGFPPKNFSIYEKALLHKSSSKRDENGCYQNNERLEFLGDAIFNAIIAVILYKKFPTNDEGFLTNTRSKIVKRDTLDKIAYQLGINHLIMISAKVKNHKHIMGNTLEAFIGAIYLDKGYLKTKEFVEKRIINPYIDIDTLVREEVNFKSKLFEWCQKHKILLQFQTLENFTDNNRNVVFQIQALLNNHIAGIGIGYSKRESQQHASQMTWRKIRTDKIFLREVFAGVKKTNSEDK</sequence>
<name>RNC_AZOPC</name>
<feature type="chain" id="PRO_1000094095" description="Ribonuclease 3">
    <location>
        <begin position="1"/>
        <end position="261"/>
    </location>
</feature>
<feature type="domain" description="RNase III" evidence="1">
    <location>
        <begin position="20"/>
        <end position="144"/>
    </location>
</feature>
<feature type="domain" description="DRBM" evidence="1">
    <location>
        <begin position="172"/>
        <end position="241"/>
    </location>
</feature>
<feature type="active site" evidence="1">
    <location>
        <position position="66"/>
    </location>
</feature>
<feature type="active site" evidence="1">
    <location>
        <position position="133"/>
    </location>
</feature>
<feature type="binding site" evidence="1">
    <location>
        <position position="62"/>
    </location>
    <ligand>
        <name>Mg(2+)</name>
        <dbReference type="ChEBI" id="CHEBI:18420"/>
    </ligand>
</feature>
<feature type="binding site" evidence="1">
    <location>
        <position position="130"/>
    </location>
    <ligand>
        <name>Mg(2+)</name>
        <dbReference type="ChEBI" id="CHEBI:18420"/>
    </ligand>
</feature>
<feature type="binding site" evidence="1">
    <location>
        <position position="133"/>
    </location>
    <ligand>
        <name>Mg(2+)</name>
        <dbReference type="ChEBI" id="CHEBI:18420"/>
    </ligand>
</feature>